<proteinExistence type="uncertain"/>
<geneLocation type="chloroplast"/>
<evidence type="ECO:0000255" key="1">
    <source>
        <dbReference type="PROSITE-ProRule" id="PRU01136"/>
    </source>
</evidence>
<evidence type="ECO:0000305" key="2"/>
<sequence length="106" mass="12455">MALQSLRGSMRSVVGKRICPLIEYAIFPPLPRIIVYASRRARMQRGNYSLIKKPKKVSTLRQYQSTKSPMYQSLQRICGVREWLNKYCMWKEVDEKDFGFEIGAFD</sequence>
<name>ACCD_ORYSA</name>
<dbReference type="EMBL" id="AY522331">
    <property type="protein sequence ID" value="AAS46191.1"/>
    <property type="molecule type" value="Genomic_DNA"/>
</dbReference>
<dbReference type="RefSeq" id="NP_039394.1">
    <property type="nucleotide sequence ID" value="NC_001320.1"/>
</dbReference>
<dbReference type="RefSeq" id="YP_009305313.1">
    <property type="nucleotide sequence ID" value="NC_031333.1"/>
</dbReference>
<dbReference type="SMR" id="P0C2Y2"/>
<dbReference type="GeneID" id="29141379"/>
<dbReference type="KEGG" id="osa:3131466"/>
<dbReference type="GO" id="GO:0009570">
    <property type="term" value="C:chloroplast stroma"/>
    <property type="evidence" value="ECO:0007669"/>
    <property type="project" value="UniProtKB-SubCell"/>
</dbReference>
<dbReference type="GO" id="GO:0009536">
    <property type="term" value="C:plastid"/>
    <property type="evidence" value="ECO:0000305"/>
    <property type="project" value="Gramene"/>
</dbReference>
<dbReference type="GO" id="GO:0005524">
    <property type="term" value="F:ATP binding"/>
    <property type="evidence" value="ECO:0007669"/>
    <property type="project" value="UniProtKB-KW"/>
</dbReference>
<dbReference type="GO" id="GO:0016874">
    <property type="term" value="F:ligase activity"/>
    <property type="evidence" value="ECO:0007669"/>
    <property type="project" value="UniProtKB-KW"/>
</dbReference>
<dbReference type="GO" id="GO:0006633">
    <property type="term" value="P:fatty acid biosynthetic process"/>
    <property type="evidence" value="ECO:0007669"/>
    <property type="project" value="UniProtKB-KW"/>
</dbReference>
<dbReference type="InterPro" id="IPR029045">
    <property type="entry name" value="ClpP/crotonase-like_dom_sf"/>
</dbReference>
<dbReference type="InterPro" id="IPR011762">
    <property type="entry name" value="COA_CT_N"/>
</dbReference>
<dbReference type="SUPFAM" id="SSF52096">
    <property type="entry name" value="ClpP/crotonase"/>
    <property type="match status" value="1"/>
</dbReference>
<dbReference type="PROSITE" id="PS50980">
    <property type="entry name" value="COA_CT_NTER"/>
    <property type="match status" value="1"/>
</dbReference>
<comment type="subcellular location">
    <subcellularLocation>
        <location evidence="2">Plastid</location>
        <location evidence="2">Chloroplast stroma</location>
    </subcellularLocation>
</comment>
<comment type="similarity">
    <text evidence="2">Belongs to the AccD/PCCB family.</text>
</comment>
<comment type="caution">
    <text evidence="2">Could be the product of a pseudogene. Corresponds to the C-terminal part of other plant accD proteins.</text>
</comment>
<protein>
    <recommendedName>
        <fullName>Putative acetyl-coenzyme A carboxylase carboxyl transferase subunit beta-like protein</fullName>
    </recommendedName>
</protein>
<accession>P0C2Y2</accession>
<accession>P12218</accession>
<accession>Q6QY67</accession>
<accession>Q7G7B5</accession>
<gene>
    <name type="primary">accD</name>
    <name type="synonym">ycf11</name>
    <name type="ORF">PA067</name>
</gene>
<keyword id="KW-0067">ATP-binding</keyword>
<keyword id="KW-0150">Chloroplast</keyword>
<keyword id="KW-0275">Fatty acid biosynthesis</keyword>
<keyword id="KW-0276">Fatty acid metabolism</keyword>
<keyword id="KW-0436">Ligase</keyword>
<keyword id="KW-0444">Lipid biosynthesis</keyword>
<keyword id="KW-0443">Lipid metabolism</keyword>
<keyword id="KW-0547">Nucleotide-binding</keyword>
<keyword id="KW-0934">Plastid</keyword>
<reference key="1">
    <citation type="journal article" date="2004" name="Plant Physiol.">
        <title>A comparison of rice chloroplast genomes.</title>
        <authorList>
            <person name="Tang J."/>
            <person name="Xia H."/>
            <person name="Cao M."/>
            <person name="Zhang X."/>
            <person name="Zeng W."/>
            <person name="Hu S."/>
            <person name="Tong W."/>
            <person name="Wang J."/>
            <person name="Wang J."/>
            <person name="Yu J."/>
            <person name="Yang H."/>
            <person name="Zhu L."/>
        </authorList>
    </citation>
    <scope>NUCLEOTIDE SEQUENCE [LARGE SCALE GENOMIC DNA]</scope>
    <source>
        <strain>cv. PA64s</strain>
    </source>
</reference>
<feature type="chain" id="PRO_0000199788" description="Putative acetyl-coenzyme A carboxylase carboxyl transferase subunit beta-like protein">
    <location>
        <begin position="1"/>
        <end position="106"/>
    </location>
</feature>
<feature type="domain" description="CoA carboxyltransferase N-terminal" evidence="1">
    <location>
        <begin position="1"/>
        <end position="106"/>
    </location>
</feature>
<organism>
    <name type="scientific">Oryza sativa</name>
    <name type="common">Rice</name>
    <dbReference type="NCBI Taxonomy" id="4530"/>
    <lineage>
        <taxon>Eukaryota</taxon>
        <taxon>Viridiplantae</taxon>
        <taxon>Streptophyta</taxon>
        <taxon>Embryophyta</taxon>
        <taxon>Tracheophyta</taxon>
        <taxon>Spermatophyta</taxon>
        <taxon>Magnoliopsida</taxon>
        <taxon>Liliopsida</taxon>
        <taxon>Poales</taxon>
        <taxon>Poaceae</taxon>
        <taxon>BOP clade</taxon>
        <taxon>Oryzoideae</taxon>
        <taxon>Oryzeae</taxon>
        <taxon>Oryzinae</taxon>
        <taxon>Oryza</taxon>
    </lineage>
</organism>